<sequence length="683" mass="75060">MNVLAKTRVYELAKELDITSRELIDILASEFNITVKNHMSVLDEEDAELIKEIFDDEENSDEKANRSVVADEEIDASNKKVKNKKKEVKKGNKNADNESSEEEIVIEMEDTITVKALADKLKKPTTEVIKQLMFMGVMAAINQELDFNTAEKLAEKFNAVIMQKEDDTITKEIEDEDEGTEKRPPVVTVMGHVDHGKTSILDAIRKAKVTSTEAGGITQHIGAYTVNVNGEKITFLDTPGHEAFTTMRARGAQVTDIVILVVAADDGIMPQTIEAINHCKAAEVPMIVAINKIDKPAANLDRVKQELTEHNLIPEDWGGDVITVPVSAHTKEGLDTLLEMIILTAEMEELKADPERKAKGTVIEAKLDKGRGPVASLLVQNGTLKVGDSIIVGNTYGRIRAMFDDKGKNIKVAGPSIPVEILGLSEVPDAGDRFNVVKDEKTARNMADKRKEKLREKRMQSTNKVSLEDLYNQIQEGKVKELDVIVKADVQGSVEAVIQSLEKLSTDSVKVRVIHGAVGAISETDVTLAAASNAVIIGFNVRPSNNATVLAEKEGVNVRTYRVIYDALDDIKAAMVGMLEPEYKEVVLGSAEVRVVYKISSVGTIAGCYVLNGKITRDSSVRVIRDGIVIFESEISSLKRFKDDAKEVAKGYECGLSVEKFNDIKEGDIIEAFTMEEIKPKNL</sequence>
<proteinExistence type="inferred from homology"/>
<dbReference type="EMBL" id="CP000382">
    <property type="protein sequence ID" value="ABK62071.1"/>
    <property type="molecule type" value="Genomic_DNA"/>
</dbReference>
<dbReference type="SMR" id="A0Q0Q7"/>
<dbReference type="STRING" id="386415.NT01CX_2136"/>
<dbReference type="KEGG" id="cno:NT01CX_2136"/>
<dbReference type="eggNOG" id="COG0532">
    <property type="taxonomic scope" value="Bacteria"/>
</dbReference>
<dbReference type="HOGENOM" id="CLU_006301_5_1_9"/>
<dbReference type="Proteomes" id="UP000008220">
    <property type="component" value="Chromosome"/>
</dbReference>
<dbReference type="GO" id="GO:0005829">
    <property type="term" value="C:cytosol"/>
    <property type="evidence" value="ECO:0007669"/>
    <property type="project" value="TreeGrafter"/>
</dbReference>
<dbReference type="GO" id="GO:0005525">
    <property type="term" value="F:GTP binding"/>
    <property type="evidence" value="ECO:0007669"/>
    <property type="project" value="UniProtKB-KW"/>
</dbReference>
<dbReference type="GO" id="GO:0003924">
    <property type="term" value="F:GTPase activity"/>
    <property type="evidence" value="ECO:0007669"/>
    <property type="project" value="UniProtKB-UniRule"/>
</dbReference>
<dbReference type="GO" id="GO:0003743">
    <property type="term" value="F:translation initiation factor activity"/>
    <property type="evidence" value="ECO:0007669"/>
    <property type="project" value="UniProtKB-UniRule"/>
</dbReference>
<dbReference type="CDD" id="cd01887">
    <property type="entry name" value="IF2_eIF5B"/>
    <property type="match status" value="1"/>
</dbReference>
<dbReference type="CDD" id="cd03702">
    <property type="entry name" value="IF2_mtIF2_II"/>
    <property type="match status" value="1"/>
</dbReference>
<dbReference type="CDD" id="cd03692">
    <property type="entry name" value="mtIF2_IVc"/>
    <property type="match status" value="1"/>
</dbReference>
<dbReference type="FunFam" id="2.40.30.10:FF:000007">
    <property type="entry name" value="Translation initiation factor IF-2"/>
    <property type="match status" value="1"/>
</dbReference>
<dbReference type="FunFam" id="2.40.30.10:FF:000008">
    <property type="entry name" value="Translation initiation factor IF-2"/>
    <property type="match status" value="1"/>
</dbReference>
<dbReference type="FunFam" id="3.40.50.10050:FF:000001">
    <property type="entry name" value="Translation initiation factor IF-2"/>
    <property type="match status" value="1"/>
</dbReference>
<dbReference type="FunFam" id="3.40.50.300:FF:000019">
    <property type="entry name" value="Translation initiation factor IF-2"/>
    <property type="match status" value="1"/>
</dbReference>
<dbReference type="Gene3D" id="1.10.10.2480">
    <property type="match status" value="1"/>
</dbReference>
<dbReference type="Gene3D" id="3.40.50.300">
    <property type="entry name" value="P-loop containing nucleotide triphosphate hydrolases"/>
    <property type="match status" value="1"/>
</dbReference>
<dbReference type="Gene3D" id="2.40.30.10">
    <property type="entry name" value="Translation factors"/>
    <property type="match status" value="2"/>
</dbReference>
<dbReference type="Gene3D" id="3.40.50.10050">
    <property type="entry name" value="Translation initiation factor IF- 2, domain 3"/>
    <property type="match status" value="1"/>
</dbReference>
<dbReference type="HAMAP" id="MF_00100_B">
    <property type="entry name" value="IF_2_B"/>
    <property type="match status" value="1"/>
</dbReference>
<dbReference type="InterPro" id="IPR053905">
    <property type="entry name" value="EF-G-like_DII"/>
</dbReference>
<dbReference type="InterPro" id="IPR004161">
    <property type="entry name" value="EFTu-like_2"/>
</dbReference>
<dbReference type="InterPro" id="IPR044145">
    <property type="entry name" value="IF2_II"/>
</dbReference>
<dbReference type="InterPro" id="IPR006847">
    <property type="entry name" value="IF2_N"/>
</dbReference>
<dbReference type="InterPro" id="IPR027417">
    <property type="entry name" value="P-loop_NTPase"/>
</dbReference>
<dbReference type="InterPro" id="IPR005225">
    <property type="entry name" value="Small_GTP-bd"/>
</dbReference>
<dbReference type="InterPro" id="IPR000795">
    <property type="entry name" value="T_Tr_GTP-bd_dom"/>
</dbReference>
<dbReference type="InterPro" id="IPR000178">
    <property type="entry name" value="TF_IF2_bacterial-like"/>
</dbReference>
<dbReference type="InterPro" id="IPR015760">
    <property type="entry name" value="TIF_IF2"/>
</dbReference>
<dbReference type="InterPro" id="IPR023115">
    <property type="entry name" value="TIF_IF2_dom3"/>
</dbReference>
<dbReference type="InterPro" id="IPR036925">
    <property type="entry name" value="TIF_IF2_dom3_sf"/>
</dbReference>
<dbReference type="InterPro" id="IPR009000">
    <property type="entry name" value="Transl_B-barrel_sf"/>
</dbReference>
<dbReference type="NCBIfam" id="TIGR00487">
    <property type="entry name" value="IF-2"/>
    <property type="match status" value="1"/>
</dbReference>
<dbReference type="NCBIfam" id="TIGR00231">
    <property type="entry name" value="small_GTP"/>
    <property type="match status" value="1"/>
</dbReference>
<dbReference type="PANTHER" id="PTHR43381:SF5">
    <property type="entry name" value="TR-TYPE G DOMAIN-CONTAINING PROTEIN"/>
    <property type="match status" value="1"/>
</dbReference>
<dbReference type="PANTHER" id="PTHR43381">
    <property type="entry name" value="TRANSLATION INITIATION FACTOR IF-2-RELATED"/>
    <property type="match status" value="1"/>
</dbReference>
<dbReference type="Pfam" id="PF22042">
    <property type="entry name" value="EF-G_D2"/>
    <property type="match status" value="1"/>
</dbReference>
<dbReference type="Pfam" id="PF00009">
    <property type="entry name" value="GTP_EFTU"/>
    <property type="match status" value="1"/>
</dbReference>
<dbReference type="Pfam" id="PF03144">
    <property type="entry name" value="GTP_EFTU_D2"/>
    <property type="match status" value="1"/>
</dbReference>
<dbReference type="Pfam" id="PF11987">
    <property type="entry name" value="IF-2"/>
    <property type="match status" value="1"/>
</dbReference>
<dbReference type="Pfam" id="PF04760">
    <property type="entry name" value="IF2_N"/>
    <property type="match status" value="2"/>
</dbReference>
<dbReference type="SUPFAM" id="SSF52156">
    <property type="entry name" value="Initiation factor IF2/eIF5b, domain 3"/>
    <property type="match status" value="1"/>
</dbReference>
<dbReference type="SUPFAM" id="SSF52540">
    <property type="entry name" value="P-loop containing nucleoside triphosphate hydrolases"/>
    <property type="match status" value="1"/>
</dbReference>
<dbReference type="SUPFAM" id="SSF50447">
    <property type="entry name" value="Translation proteins"/>
    <property type="match status" value="2"/>
</dbReference>
<dbReference type="PROSITE" id="PS51722">
    <property type="entry name" value="G_TR_2"/>
    <property type="match status" value="1"/>
</dbReference>
<dbReference type="PROSITE" id="PS01176">
    <property type="entry name" value="IF2"/>
    <property type="match status" value="1"/>
</dbReference>
<name>IF2_CLONN</name>
<comment type="function">
    <text evidence="2">One of the essential components for the initiation of protein synthesis. Protects formylmethionyl-tRNA from spontaneous hydrolysis and promotes its binding to the 30S ribosomal subunits. Also involved in the hydrolysis of GTP during the formation of the 70S ribosomal complex.</text>
</comment>
<comment type="subcellular location">
    <subcellularLocation>
        <location evidence="2">Cytoplasm</location>
    </subcellularLocation>
</comment>
<comment type="similarity">
    <text evidence="2">Belongs to the TRAFAC class translation factor GTPase superfamily. Classic translation factor GTPase family. IF-2 subfamily.</text>
</comment>
<protein>
    <recommendedName>
        <fullName evidence="2">Translation initiation factor IF-2</fullName>
    </recommendedName>
</protein>
<gene>
    <name evidence="2" type="primary">infB</name>
    <name type="ordered locus">NT01CX_2136</name>
</gene>
<accession>A0Q0Q7</accession>
<organism>
    <name type="scientific">Clostridium novyi (strain NT)</name>
    <dbReference type="NCBI Taxonomy" id="386415"/>
    <lineage>
        <taxon>Bacteria</taxon>
        <taxon>Bacillati</taxon>
        <taxon>Bacillota</taxon>
        <taxon>Clostridia</taxon>
        <taxon>Eubacteriales</taxon>
        <taxon>Clostridiaceae</taxon>
        <taxon>Clostridium</taxon>
    </lineage>
</organism>
<keyword id="KW-0963">Cytoplasm</keyword>
<keyword id="KW-0342">GTP-binding</keyword>
<keyword id="KW-0396">Initiation factor</keyword>
<keyword id="KW-0547">Nucleotide-binding</keyword>
<keyword id="KW-0648">Protein biosynthesis</keyword>
<keyword id="KW-1185">Reference proteome</keyword>
<evidence type="ECO:0000250" key="1"/>
<evidence type="ECO:0000255" key="2">
    <source>
        <dbReference type="HAMAP-Rule" id="MF_00100"/>
    </source>
</evidence>
<feature type="chain" id="PRO_1000057652" description="Translation initiation factor IF-2">
    <location>
        <begin position="1"/>
        <end position="683"/>
    </location>
</feature>
<feature type="domain" description="tr-type G">
    <location>
        <begin position="182"/>
        <end position="351"/>
    </location>
</feature>
<feature type="region of interest" description="G1" evidence="1">
    <location>
        <begin position="191"/>
        <end position="198"/>
    </location>
</feature>
<feature type="region of interest" description="G2" evidence="1">
    <location>
        <begin position="216"/>
        <end position="220"/>
    </location>
</feature>
<feature type="region of interest" description="G3" evidence="1">
    <location>
        <begin position="237"/>
        <end position="240"/>
    </location>
</feature>
<feature type="region of interest" description="G4" evidence="1">
    <location>
        <begin position="291"/>
        <end position="294"/>
    </location>
</feature>
<feature type="region of interest" description="G5" evidence="1">
    <location>
        <begin position="327"/>
        <end position="329"/>
    </location>
</feature>
<feature type="binding site" evidence="2">
    <location>
        <begin position="191"/>
        <end position="198"/>
    </location>
    <ligand>
        <name>GTP</name>
        <dbReference type="ChEBI" id="CHEBI:37565"/>
    </ligand>
</feature>
<feature type="binding site" evidence="2">
    <location>
        <begin position="237"/>
        <end position="241"/>
    </location>
    <ligand>
        <name>GTP</name>
        <dbReference type="ChEBI" id="CHEBI:37565"/>
    </ligand>
</feature>
<feature type="binding site" evidence="2">
    <location>
        <begin position="291"/>
        <end position="294"/>
    </location>
    <ligand>
        <name>GTP</name>
        <dbReference type="ChEBI" id="CHEBI:37565"/>
    </ligand>
</feature>
<reference key="1">
    <citation type="journal article" date="2006" name="Nat. Biotechnol.">
        <title>The genome and transcriptomes of the anti-tumor agent Clostridium novyi-NT.</title>
        <authorList>
            <person name="Bettegowda C."/>
            <person name="Huang X."/>
            <person name="Lin J."/>
            <person name="Cheong I."/>
            <person name="Kohli M."/>
            <person name="Szabo S.A."/>
            <person name="Zhang X."/>
            <person name="Diaz L.A. Jr."/>
            <person name="Velculescu V.E."/>
            <person name="Parmigiani G."/>
            <person name="Kinzler K.W."/>
            <person name="Vogelstein B."/>
            <person name="Zhou S."/>
        </authorList>
    </citation>
    <scope>NUCLEOTIDE SEQUENCE [LARGE SCALE GENOMIC DNA]</scope>
    <source>
        <strain>NT</strain>
    </source>
</reference>